<comment type="function">
    <text evidence="1">Required for accurate and efficient protein synthesis under certain stress conditions. May act as a fidelity factor of the translation reaction, by catalyzing a one-codon backward translocation of tRNAs on improperly translocated ribosomes. Back-translocation proceeds from a post-translocation (POST) complex to a pre-translocation (PRE) complex, thus giving elongation factor G a second chance to translocate the tRNAs correctly. Binds to ribosomes in a GTP-dependent manner.</text>
</comment>
<comment type="catalytic activity">
    <reaction evidence="1">
        <text>GTP + H2O = GDP + phosphate + H(+)</text>
        <dbReference type="Rhea" id="RHEA:19669"/>
        <dbReference type="ChEBI" id="CHEBI:15377"/>
        <dbReference type="ChEBI" id="CHEBI:15378"/>
        <dbReference type="ChEBI" id="CHEBI:37565"/>
        <dbReference type="ChEBI" id="CHEBI:43474"/>
        <dbReference type="ChEBI" id="CHEBI:58189"/>
        <dbReference type="EC" id="3.6.5.n1"/>
    </reaction>
</comment>
<comment type="subcellular location">
    <subcellularLocation>
        <location evidence="1">Cell inner membrane</location>
        <topology evidence="1">Peripheral membrane protein</topology>
        <orientation evidence="1">Cytoplasmic side</orientation>
    </subcellularLocation>
</comment>
<comment type="similarity">
    <text evidence="1">Belongs to the TRAFAC class translation factor GTPase superfamily. Classic translation factor GTPase family. LepA subfamily.</text>
</comment>
<organism>
    <name type="scientific">Alcanivorax borkumensis (strain ATCC 700651 / DSM 11573 / NCIMB 13689 / SK2)</name>
    <dbReference type="NCBI Taxonomy" id="393595"/>
    <lineage>
        <taxon>Bacteria</taxon>
        <taxon>Pseudomonadati</taxon>
        <taxon>Pseudomonadota</taxon>
        <taxon>Gammaproteobacteria</taxon>
        <taxon>Oceanospirillales</taxon>
        <taxon>Alcanivoracaceae</taxon>
        <taxon>Alcanivorax</taxon>
    </lineage>
</organism>
<proteinExistence type="inferred from homology"/>
<evidence type="ECO:0000255" key="1">
    <source>
        <dbReference type="HAMAP-Rule" id="MF_00071"/>
    </source>
</evidence>
<protein>
    <recommendedName>
        <fullName evidence="1">Elongation factor 4</fullName>
        <shortName evidence="1">EF-4</shortName>
        <ecNumber evidence="1">3.6.5.n1</ecNumber>
    </recommendedName>
    <alternativeName>
        <fullName evidence="1">Ribosomal back-translocase LepA</fullName>
    </alternativeName>
</protein>
<sequence>MTDIKNIRNFSIIAHIDHGKSTLADRFIQVCGGLSERELKEQVLDSMELERERGITIKAQSVTLHYTARDGETYQLNFIDTPGHVDFSYEVSRSLSACEGALLVVDAAQGVEAQSVANCYTAIEQDLEVLAVLNKIDLPQAEPEMVINEIEEIIGLDAHDACRVSAKTGVGIDDLLEQLVERIPAPEGKRESDLQALIIDSWFDNYMGVISLVRVKEGRLKKGDKILVKSTGQTHVVDSLGIFTPKRTETKLLEAGEVGWVSGSIKDIHGAPVGDTLTLAKTPNVAALPGFKNVKPQVYAGMFPVSADDYEDFRDALAKLTLNDASLFYEPETSDALGFGFRVGFLGMLHMEIIQERLEREYDLDLITTAPTVVYELALVSGDILHVDNPSKLPEGSKIEEFREPIARVNILVPQEFVGNVITLCVERRGAQINMQYLGKQVALTYDIPMAEVVLDFFDRIKSVSRGFASMDYAFERFEATKLVRVDVLINGDKVDALAMICHLDQSAYRGRALCEKMKELVPRQMFDVAIQAAIGSKIIARQTVKALRKNVTAKCYGGDVSRKKKLLQKQKEGKKRMKQVGNVEIPQEAFLAVLKVDD</sequence>
<accession>Q0VP16</accession>
<gene>
    <name evidence="1" type="primary">lepA</name>
    <name type="ordered locus">ABO_1634</name>
</gene>
<feature type="chain" id="PRO_0000265633" description="Elongation factor 4">
    <location>
        <begin position="1"/>
        <end position="599"/>
    </location>
</feature>
<feature type="domain" description="tr-type G">
    <location>
        <begin position="5"/>
        <end position="187"/>
    </location>
</feature>
<feature type="binding site" evidence="1">
    <location>
        <begin position="17"/>
        <end position="22"/>
    </location>
    <ligand>
        <name>GTP</name>
        <dbReference type="ChEBI" id="CHEBI:37565"/>
    </ligand>
</feature>
<feature type="binding site" evidence="1">
    <location>
        <begin position="134"/>
        <end position="137"/>
    </location>
    <ligand>
        <name>GTP</name>
        <dbReference type="ChEBI" id="CHEBI:37565"/>
    </ligand>
</feature>
<dbReference type="EC" id="3.6.5.n1" evidence="1"/>
<dbReference type="EMBL" id="AM286690">
    <property type="protein sequence ID" value="CAL17082.1"/>
    <property type="molecule type" value="Genomic_DNA"/>
</dbReference>
<dbReference type="RefSeq" id="WP_011588915.1">
    <property type="nucleotide sequence ID" value="NC_008260.1"/>
</dbReference>
<dbReference type="SMR" id="Q0VP16"/>
<dbReference type="STRING" id="393595.ABO_1634"/>
<dbReference type="KEGG" id="abo:ABO_1634"/>
<dbReference type="eggNOG" id="COG0481">
    <property type="taxonomic scope" value="Bacteria"/>
</dbReference>
<dbReference type="HOGENOM" id="CLU_009995_3_3_6"/>
<dbReference type="OrthoDB" id="9804431at2"/>
<dbReference type="Proteomes" id="UP000008871">
    <property type="component" value="Chromosome"/>
</dbReference>
<dbReference type="GO" id="GO:0005886">
    <property type="term" value="C:plasma membrane"/>
    <property type="evidence" value="ECO:0007669"/>
    <property type="project" value="UniProtKB-SubCell"/>
</dbReference>
<dbReference type="GO" id="GO:0005525">
    <property type="term" value="F:GTP binding"/>
    <property type="evidence" value="ECO:0007669"/>
    <property type="project" value="UniProtKB-UniRule"/>
</dbReference>
<dbReference type="GO" id="GO:0003924">
    <property type="term" value="F:GTPase activity"/>
    <property type="evidence" value="ECO:0007669"/>
    <property type="project" value="UniProtKB-UniRule"/>
</dbReference>
<dbReference type="GO" id="GO:0097216">
    <property type="term" value="F:guanosine tetraphosphate binding"/>
    <property type="evidence" value="ECO:0007669"/>
    <property type="project" value="UniProtKB-ARBA"/>
</dbReference>
<dbReference type="GO" id="GO:0043022">
    <property type="term" value="F:ribosome binding"/>
    <property type="evidence" value="ECO:0007669"/>
    <property type="project" value="UniProtKB-UniRule"/>
</dbReference>
<dbReference type="GO" id="GO:0003746">
    <property type="term" value="F:translation elongation factor activity"/>
    <property type="evidence" value="ECO:0007669"/>
    <property type="project" value="UniProtKB-UniRule"/>
</dbReference>
<dbReference type="GO" id="GO:0045727">
    <property type="term" value="P:positive regulation of translation"/>
    <property type="evidence" value="ECO:0007669"/>
    <property type="project" value="UniProtKB-UniRule"/>
</dbReference>
<dbReference type="CDD" id="cd03699">
    <property type="entry name" value="EF4_II"/>
    <property type="match status" value="1"/>
</dbReference>
<dbReference type="CDD" id="cd16260">
    <property type="entry name" value="EF4_III"/>
    <property type="match status" value="1"/>
</dbReference>
<dbReference type="CDD" id="cd01890">
    <property type="entry name" value="LepA"/>
    <property type="match status" value="1"/>
</dbReference>
<dbReference type="CDD" id="cd03709">
    <property type="entry name" value="lepA_C"/>
    <property type="match status" value="1"/>
</dbReference>
<dbReference type="FunFam" id="3.40.50.300:FF:000078">
    <property type="entry name" value="Elongation factor 4"/>
    <property type="match status" value="1"/>
</dbReference>
<dbReference type="FunFam" id="2.40.30.10:FF:000015">
    <property type="entry name" value="Translation factor GUF1, mitochondrial"/>
    <property type="match status" value="1"/>
</dbReference>
<dbReference type="FunFam" id="3.30.70.240:FF:000007">
    <property type="entry name" value="Translation factor GUF1, mitochondrial"/>
    <property type="match status" value="1"/>
</dbReference>
<dbReference type="FunFam" id="3.30.70.2570:FF:000001">
    <property type="entry name" value="Translation factor GUF1, mitochondrial"/>
    <property type="match status" value="1"/>
</dbReference>
<dbReference type="FunFam" id="3.30.70.870:FF:000004">
    <property type="entry name" value="Translation factor GUF1, mitochondrial"/>
    <property type="match status" value="1"/>
</dbReference>
<dbReference type="Gene3D" id="3.30.70.240">
    <property type="match status" value="1"/>
</dbReference>
<dbReference type="Gene3D" id="3.30.70.2570">
    <property type="entry name" value="Elongation factor 4, C-terminal domain"/>
    <property type="match status" value="1"/>
</dbReference>
<dbReference type="Gene3D" id="3.30.70.870">
    <property type="entry name" value="Elongation Factor G (Translational Gtpase), domain 3"/>
    <property type="match status" value="1"/>
</dbReference>
<dbReference type="Gene3D" id="3.40.50.300">
    <property type="entry name" value="P-loop containing nucleotide triphosphate hydrolases"/>
    <property type="match status" value="1"/>
</dbReference>
<dbReference type="Gene3D" id="2.40.30.10">
    <property type="entry name" value="Translation factors"/>
    <property type="match status" value="1"/>
</dbReference>
<dbReference type="HAMAP" id="MF_00071">
    <property type="entry name" value="LepA"/>
    <property type="match status" value="1"/>
</dbReference>
<dbReference type="InterPro" id="IPR006297">
    <property type="entry name" value="EF-4"/>
</dbReference>
<dbReference type="InterPro" id="IPR035647">
    <property type="entry name" value="EFG_III/V"/>
</dbReference>
<dbReference type="InterPro" id="IPR000640">
    <property type="entry name" value="EFG_V-like"/>
</dbReference>
<dbReference type="InterPro" id="IPR004161">
    <property type="entry name" value="EFTu-like_2"/>
</dbReference>
<dbReference type="InterPro" id="IPR031157">
    <property type="entry name" value="G_TR_CS"/>
</dbReference>
<dbReference type="InterPro" id="IPR038363">
    <property type="entry name" value="LepA_C_sf"/>
</dbReference>
<dbReference type="InterPro" id="IPR013842">
    <property type="entry name" value="LepA_CTD"/>
</dbReference>
<dbReference type="InterPro" id="IPR035654">
    <property type="entry name" value="LepA_IV"/>
</dbReference>
<dbReference type="InterPro" id="IPR027417">
    <property type="entry name" value="P-loop_NTPase"/>
</dbReference>
<dbReference type="InterPro" id="IPR005225">
    <property type="entry name" value="Small_GTP-bd"/>
</dbReference>
<dbReference type="InterPro" id="IPR000795">
    <property type="entry name" value="T_Tr_GTP-bd_dom"/>
</dbReference>
<dbReference type="NCBIfam" id="TIGR01393">
    <property type="entry name" value="lepA"/>
    <property type="match status" value="1"/>
</dbReference>
<dbReference type="NCBIfam" id="TIGR00231">
    <property type="entry name" value="small_GTP"/>
    <property type="match status" value="1"/>
</dbReference>
<dbReference type="PANTHER" id="PTHR43512:SF4">
    <property type="entry name" value="TRANSLATION FACTOR GUF1 HOMOLOG, CHLOROPLASTIC"/>
    <property type="match status" value="1"/>
</dbReference>
<dbReference type="PANTHER" id="PTHR43512">
    <property type="entry name" value="TRANSLATION FACTOR GUF1-RELATED"/>
    <property type="match status" value="1"/>
</dbReference>
<dbReference type="Pfam" id="PF00679">
    <property type="entry name" value="EFG_C"/>
    <property type="match status" value="1"/>
</dbReference>
<dbReference type="Pfam" id="PF00009">
    <property type="entry name" value="GTP_EFTU"/>
    <property type="match status" value="1"/>
</dbReference>
<dbReference type="Pfam" id="PF03144">
    <property type="entry name" value="GTP_EFTU_D2"/>
    <property type="match status" value="1"/>
</dbReference>
<dbReference type="Pfam" id="PF06421">
    <property type="entry name" value="LepA_C"/>
    <property type="match status" value="1"/>
</dbReference>
<dbReference type="PRINTS" id="PR00315">
    <property type="entry name" value="ELONGATNFCT"/>
</dbReference>
<dbReference type="SUPFAM" id="SSF54980">
    <property type="entry name" value="EF-G C-terminal domain-like"/>
    <property type="match status" value="2"/>
</dbReference>
<dbReference type="SUPFAM" id="SSF52540">
    <property type="entry name" value="P-loop containing nucleoside triphosphate hydrolases"/>
    <property type="match status" value="1"/>
</dbReference>
<dbReference type="PROSITE" id="PS00301">
    <property type="entry name" value="G_TR_1"/>
    <property type="match status" value="1"/>
</dbReference>
<dbReference type="PROSITE" id="PS51722">
    <property type="entry name" value="G_TR_2"/>
    <property type="match status" value="1"/>
</dbReference>
<name>LEPA_ALCBS</name>
<keyword id="KW-0997">Cell inner membrane</keyword>
<keyword id="KW-1003">Cell membrane</keyword>
<keyword id="KW-0342">GTP-binding</keyword>
<keyword id="KW-0378">Hydrolase</keyword>
<keyword id="KW-0472">Membrane</keyword>
<keyword id="KW-0547">Nucleotide-binding</keyword>
<keyword id="KW-0648">Protein biosynthesis</keyword>
<keyword id="KW-1185">Reference proteome</keyword>
<reference key="1">
    <citation type="journal article" date="2006" name="Nat. Biotechnol.">
        <title>Genome sequence of the ubiquitous hydrocarbon-degrading marine bacterium Alcanivorax borkumensis.</title>
        <authorList>
            <person name="Schneiker S."/>
            <person name="Martins dos Santos V.A.P."/>
            <person name="Bartels D."/>
            <person name="Bekel T."/>
            <person name="Brecht M."/>
            <person name="Buhrmester J."/>
            <person name="Chernikova T.N."/>
            <person name="Denaro R."/>
            <person name="Ferrer M."/>
            <person name="Gertler C."/>
            <person name="Goesmann A."/>
            <person name="Golyshina O.V."/>
            <person name="Kaminski F."/>
            <person name="Khachane A.N."/>
            <person name="Lang S."/>
            <person name="Linke B."/>
            <person name="McHardy A.C."/>
            <person name="Meyer F."/>
            <person name="Nechitaylo T."/>
            <person name="Puehler A."/>
            <person name="Regenhardt D."/>
            <person name="Rupp O."/>
            <person name="Sabirova J.S."/>
            <person name="Selbitschka W."/>
            <person name="Yakimov M.M."/>
            <person name="Timmis K.N."/>
            <person name="Vorhoelter F.-J."/>
            <person name="Weidner S."/>
            <person name="Kaiser O."/>
            <person name="Golyshin P.N."/>
        </authorList>
    </citation>
    <scope>NUCLEOTIDE SEQUENCE [LARGE SCALE GENOMIC DNA]</scope>
    <source>
        <strain>ATCC 700651 / DSM 11573 / NCIMB 13689 / SK2</strain>
    </source>
</reference>